<name>DEOB_RHIR8</name>
<gene>
    <name evidence="1" type="primary">deoB</name>
    <name type="ordered locus">Arad_0353</name>
</gene>
<evidence type="ECO:0000255" key="1">
    <source>
        <dbReference type="HAMAP-Rule" id="MF_00740"/>
    </source>
</evidence>
<proteinExistence type="inferred from homology"/>
<comment type="function">
    <text evidence="1">Isomerase that catalyzes the conversion of deoxy-ribose 1-phosphate (dRib-1-P) and ribose 1-phosphate (Rib-1-P) to deoxy-ribose 5-phosphate (dRib-5-P) and ribose 5-phosphate (Rib-5-P), respectively.</text>
</comment>
<comment type="catalytic activity">
    <reaction evidence="1">
        <text>2-deoxy-alpha-D-ribose 1-phosphate = 2-deoxy-D-ribose 5-phosphate</text>
        <dbReference type="Rhea" id="RHEA:27658"/>
        <dbReference type="ChEBI" id="CHEBI:57259"/>
        <dbReference type="ChEBI" id="CHEBI:62877"/>
        <dbReference type="EC" id="5.4.2.7"/>
    </reaction>
</comment>
<comment type="catalytic activity">
    <reaction evidence="1">
        <text>alpha-D-ribose 1-phosphate = D-ribose 5-phosphate</text>
        <dbReference type="Rhea" id="RHEA:18793"/>
        <dbReference type="ChEBI" id="CHEBI:57720"/>
        <dbReference type="ChEBI" id="CHEBI:78346"/>
        <dbReference type="EC" id="5.4.2.7"/>
    </reaction>
</comment>
<comment type="cofactor">
    <cofactor evidence="1">
        <name>Mn(2+)</name>
        <dbReference type="ChEBI" id="CHEBI:29035"/>
    </cofactor>
    <text evidence="1">Binds 2 manganese ions.</text>
</comment>
<comment type="pathway">
    <text evidence="1">Carbohydrate degradation; 2-deoxy-D-ribose 1-phosphate degradation; D-glyceraldehyde 3-phosphate and acetaldehyde from 2-deoxy-alpha-D-ribose 1-phosphate: step 1/2.</text>
</comment>
<comment type="subcellular location">
    <subcellularLocation>
        <location evidence="1">Cytoplasm</location>
    </subcellularLocation>
</comment>
<comment type="similarity">
    <text evidence="1">Belongs to the phosphopentomutase family.</text>
</comment>
<feature type="chain" id="PRO_1000189768" description="Phosphopentomutase">
    <location>
        <begin position="1"/>
        <end position="406"/>
    </location>
</feature>
<feature type="binding site" evidence="1">
    <location>
        <position position="10"/>
    </location>
    <ligand>
        <name>Mn(2+)</name>
        <dbReference type="ChEBI" id="CHEBI:29035"/>
        <label>1</label>
    </ligand>
</feature>
<feature type="binding site" evidence="1">
    <location>
        <position position="305"/>
    </location>
    <ligand>
        <name>Mn(2+)</name>
        <dbReference type="ChEBI" id="CHEBI:29035"/>
        <label>2</label>
    </ligand>
</feature>
<feature type="binding site" evidence="1">
    <location>
        <position position="310"/>
    </location>
    <ligand>
        <name>Mn(2+)</name>
        <dbReference type="ChEBI" id="CHEBI:29035"/>
        <label>2</label>
    </ligand>
</feature>
<feature type="binding site" evidence="1">
    <location>
        <position position="346"/>
    </location>
    <ligand>
        <name>Mn(2+)</name>
        <dbReference type="ChEBI" id="CHEBI:29035"/>
        <label>1</label>
    </ligand>
</feature>
<feature type="binding site" evidence="1">
    <location>
        <position position="347"/>
    </location>
    <ligand>
        <name>Mn(2+)</name>
        <dbReference type="ChEBI" id="CHEBI:29035"/>
        <label>1</label>
    </ligand>
</feature>
<feature type="binding site" evidence="1">
    <location>
        <position position="358"/>
    </location>
    <ligand>
        <name>Mn(2+)</name>
        <dbReference type="ChEBI" id="CHEBI:29035"/>
        <label>2</label>
    </ligand>
</feature>
<organism>
    <name type="scientific">Rhizobium rhizogenes (strain K84 / ATCC BAA-868)</name>
    <name type="common">Agrobacterium radiobacter</name>
    <dbReference type="NCBI Taxonomy" id="311403"/>
    <lineage>
        <taxon>Bacteria</taxon>
        <taxon>Pseudomonadati</taxon>
        <taxon>Pseudomonadota</taxon>
        <taxon>Alphaproteobacteria</taxon>
        <taxon>Hyphomicrobiales</taxon>
        <taxon>Rhizobiaceae</taxon>
        <taxon>Rhizobium/Agrobacterium group</taxon>
        <taxon>Rhizobium</taxon>
    </lineage>
</organism>
<keyword id="KW-0963">Cytoplasm</keyword>
<keyword id="KW-0413">Isomerase</keyword>
<keyword id="KW-0464">Manganese</keyword>
<keyword id="KW-0479">Metal-binding</keyword>
<accession>B9J6V9</accession>
<protein>
    <recommendedName>
        <fullName evidence="1">Phosphopentomutase</fullName>
        <ecNumber evidence="1">5.4.2.7</ecNumber>
    </recommendedName>
    <alternativeName>
        <fullName evidence="1">Phosphodeoxyribomutase</fullName>
    </alternativeName>
</protein>
<reference key="1">
    <citation type="journal article" date="2009" name="J. Bacteriol.">
        <title>Genome sequences of three Agrobacterium biovars help elucidate the evolution of multichromosome genomes in bacteria.</title>
        <authorList>
            <person name="Slater S.C."/>
            <person name="Goldman B.S."/>
            <person name="Goodner B."/>
            <person name="Setubal J.C."/>
            <person name="Farrand S.K."/>
            <person name="Nester E.W."/>
            <person name="Burr T.J."/>
            <person name="Banta L."/>
            <person name="Dickerman A.W."/>
            <person name="Paulsen I."/>
            <person name="Otten L."/>
            <person name="Suen G."/>
            <person name="Welch R."/>
            <person name="Almeida N.F."/>
            <person name="Arnold F."/>
            <person name="Burton O.T."/>
            <person name="Du Z."/>
            <person name="Ewing A."/>
            <person name="Godsy E."/>
            <person name="Heisel S."/>
            <person name="Houmiel K.L."/>
            <person name="Jhaveri J."/>
            <person name="Lu J."/>
            <person name="Miller N.M."/>
            <person name="Norton S."/>
            <person name="Chen Q."/>
            <person name="Phoolcharoen W."/>
            <person name="Ohlin V."/>
            <person name="Ondrusek D."/>
            <person name="Pride N."/>
            <person name="Stricklin S.L."/>
            <person name="Sun J."/>
            <person name="Wheeler C."/>
            <person name="Wilson L."/>
            <person name="Zhu H."/>
            <person name="Wood D.W."/>
        </authorList>
    </citation>
    <scope>NUCLEOTIDE SEQUENCE [LARGE SCALE GENOMIC DNA]</scope>
    <source>
        <strain>K84 / ATCC BAA-868</strain>
    </source>
</reference>
<dbReference type="EC" id="5.4.2.7" evidence="1"/>
<dbReference type="EMBL" id="CP000628">
    <property type="protein sequence ID" value="ACM25065.1"/>
    <property type="molecule type" value="Genomic_DNA"/>
</dbReference>
<dbReference type="RefSeq" id="WP_012650770.1">
    <property type="nucleotide sequence ID" value="NC_011985.1"/>
</dbReference>
<dbReference type="SMR" id="B9J6V9"/>
<dbReference type="STRING" id="311403.Arad_0353"/>
<dbReference type="KEGG" id="ara:Arad_0353"/>
<dbReference type="eggNOG" id="COG1015">
    <property type="taxonomic scope" value="Bacteria"/>
</dbReference>
<dbReference type="HOGENOM" id="CLU_053861_0_0_5"/>
<dbReference type="UniPathway" id="UPA00002">
    <property type="reaction ID" value="UER00467"/>
</dbReference>
<dbReference type="Proteomes" id="UP000001600">
    <property type="component" value="Chromosome 1"/>
</dbReference>
<dbReference type="GO" id="GO:0005829">
    <property type="term" value="C:cytosol"/>
    <property type="evidence" value="ECO:0007669"/>
    <property type="project" value="TreeGrafter"/>
</dbReference>
<dbReference type="GO" id="GO:0000287">
    <property type="term" value="F:magnesium ion binding"/>
    <property type="evidence" value="ECO:0007669"/>
    <property type="project" value="InterPro"/>
</dbReference>
<dbReference type="GO" id="GO:0030145">
    <property type="term" value="F:manganese ion binding"/>
    <property type="evidence" value="ECO:0007669"/>
    <property type="project" value="UniProtKB-UniRule"/>
</dbReference>
<dbReference type="GO" id="GO:0008973">
    <property type="term" value="F:phosphopentomutase activity"/>
    <property type="evidence" value="ECO:0007669"/>
    <property type="project" value="UniProtKB-UniRule"/>
</dbReference>
<dbReference type="GO" id="GO:0006018">
    <property type="term" value="P:2-deoxyribose 1-phosphate catabolic process"/>
    <property type="evidence" value="ECO:0007669"/>
    <property type="project" value="UniProtKB-UniRule"/>
</dbReference>
<dbReference type="GO" id="GO:0006015">
    <property type="term" value="P:5-phosphoribose 1-diphosphate biosynthetic process"/>
    <property type="evidence" value="ECO:0007669"/>
    <property type="project" value="UniProtKB-UniPathway"/>
</dbReference>
<dbReference type="GO" id="GO:0043094">
    <property type="term" value="P:metabolic compound salvage"/>
    <property type="evidence" value="ECO:0007669"/>
    <property type="project" value="InterPro"/>
</dbReference>
<dbReference type="GO" id="GO:0009117">
    <property type="term" value="P:nucleotide metabolic process"/>
    <property type="evidence" value="ECO:0007669"/>
    <property type="project" value="InterPro"/>
</dbReference>
<dbReference type="CDD" id="cd16009">
    <property type="entry name" value="PPM"/>
    <property type="match status" value="1"/>
</dbReference>
<dbReference type="FunFam" id="3.30.70.1250:FF:000001">
    <property type="entry name" value="Phosphopentomutase"/>
    <property type="match status" value="1"/>
</dbReference>
<dbReference type="Gene3D" id="3.40.720.10">
    <property type="entry name" value="Alkaline Phosphatase, subunit A"/>
    <property type="match status" value="1"/>
</dbReference>
<dbReference type="Gene3D" id="3.30.70.1250">
    <property type="entry name" value="Phosphopentomutase"/>
    <property type="match status" value="1"/>
</dbReference>
<dbReference type="HAMAP" id="MF_00740">
    <property type="entry name" value="Phosphopentomut"/>
    <property type="match status" value="1"/>
</dbReference>
<dbReference type="InterPro" id="IPR017850">
    <property type="entry name" value="Alkaline_phosphatase_core_sf"/>
</dbReference>
<dbReference type="InterPro" id="IPR010045">
    <property type="entry name" value="DeoB"/>
</dbReference>
<dbReference type="InterPro" id="IPR006124">
    <property type="entry name" value="Metalloenzyme"/>
</dbReference>
<dbReference type="InterPro" id="IPR024052">
    <property type="entry name" value="Phosphopentomutase_DeoB_cap_sf"/>
</dbReference>
<dbReference type="NCBIfam" id="TIGR01696">
    <property type="entry name" value="deoB"/>
    <property type="match status" value="1"/>
</dbReference>
<dbReference type="NCBIfam" id="NF003766">
    <property type="entry name" value="PRK05362.1"/>
    <property type="match status" value="1"/>
</dbReference>
<dbReference type="PANTHER" id="PTHR21110">
    <property type="entry name" value="PHOSPHOPENTOMUTASE"/>
    <property type="match status" value="1"/>
</dbReference>
<dbReference type="PANTHER" id="PTHR21110:SF0">
    <property type="entry name" value="PHOSPHOPENTOMUTASE"/>
    <property type="match status" value="1"/>
</dbReference>
<dbReference type="Pfam" id="PF01676">
    <property type="entry name" value="Metalloenzyme"/>
    <property type="match status" value="1"/>
</dbReference>
<dbReference type="PIRSF" id="PIRSF001491">
    <property type="entry name" value="Ppentomutase"/>
    <property type="match status" value="1"/>
</dbReference>
<dbReference type="SUPFAM" id="SSF53649">
    <property type="entry name" value="Alkaline phosphatase-like"/>
    <property type="match status" value="1"/>
</dbReference>
<dbReference type="SUPFAM" id="SSF143856">
    <property type="entry name" value="DeoB insert domain-like"/>
    <property type="match status" value="1"/>
</dbReference>
<sequence>MARAFLFVLDSFGVGGSPDATSYGDEGADTLGHIAEFCAAGAADREGLRSGPLSLPIMSGLGLLEIAKAATGRYPLGMPLPQKLYGLYGCANEISRGKDTPSGHWEIAGTPVTFDWGYFPTEGDAFPPELVEAICKAADLPGILGNCHASGTDIIARYGEEHIRSGKPICYTSSDSVFQIAAHEQHFGLERLISLCQIVRTLLDPYNIGRVIARPFIGETPANFERTGNRRDFSVLPPEPTLLDRLVAAERKVHAVGKIGDIFAHQGISRIIKANGNMKLMDATLKTMDEAADGDLVFTNFVDFDMVYGHRRDVAGYAAALEAFDARLPEVHRKLKPGDLLILTADHGCDPTWRGTDHTRERVPIIAYELGIRSRPIGIRQTYADIGETVAHHLGIAAGPHGRSFL</sequence>